<organism>
    <name type="scientific">Edwardsiella ictaluri (strain 93-146)</name>
    <dbReference type="NCBI Taxonomy" id="634503"/>
    <lineage>
        <taxon>Bacteria</taxon>
        <taxon>Pseudomonadati</taxon>
        <taxon>Pseudomonadota</taxon>
        <taxon>Gammaproteobacteria</taxon>
        <taxon>Enterobacterales</taxon>
        <taxon>Hafniaceae</taxon>
        <taxon>Edwardsiella</taxon>
    </lineage>
</organism>
<feature type="chain" id="PRO_1000203653" description="Queuine tRNA-ribosyltransferase">
    <location>
        <begin position="1"/>
        <end position="379"/>
    </location>
</feature>
<feature type="region of interest" description="RNA binding" evidence="1">
    <location>
        <begin position="245"/>
        <end position="251"/>
    </location>
</feature>
<feature type="region of interest" description="RNA binding; important for wobble base 34 recognition" evidence="1">
    <location>
        <begin position="269"/>
        <end position="273"/>
    </location>
</feature>
<feature type="active site" description="Proton acceptor" evidence="1">
    <location>
        <position position="89"/>
    </location>
</feature>
<feature type="active site" description="Nucleophile" evidence="1">
    <location>
        <position position="264"/>
    </location>
</feature>
<feature type="binding site" evidence="1">
    <location>
        <begin position="89"/>
        <end position="93"/>
    </location>
    <ligand>
        <name>substrate</name>
    </ligand>
</feature>
<feature type="binding site" evidence="1">
    <location>
        <position position="143"/>
    </location>
    <ligand>
        <name>substrate</name>
    </ligand>
</feature>
<feature type="binding site" evidence="1">
    <location>
        <position position="187"/>
    </location>
    <ligand>
        <name>substrate</name>
    </ligand>
</feature>
<feature type="binding site" evidence="1">
    <location>
        <position position="214"/>
    </location>
    <ligand>
        <name>substrate</name>
    </ligand>
</feature>
<feature type="binding site" evidence="1">
    <location>
        <position position="302"/>
    </location>
    <ligand>
        <name>Zn(2+)</name>
        <dbReference type="ChEBI" id="CHEBI:29105"/>
    </ligand>
</feature>
<feature type="binding site" evidence="1">
    <location>
        <position position="304"/>
    </location>
    <ligand>
        <name>Zn(2+)</name>
        <dbReference type="ChEBI" id="CHEBI:29105"/>
    </ligand>
</feature>
<feature type="binding site" evidence="1">
    <location>
        <position position="307"/>
    </location>
    <ligand>
        <name>Zn(2+)</name>
        <dbReference type="ChEBI" id="CHEBI:29105"/>
    </ligand>
</feature>
<feature type="binding site" evidence="1">
    <location>
        <position position="333"/>
    </location>
    <ligand>
        <name>Zn(2+)</name>
        <dbReference type="ChEBI" id="CHEBI:29105"/>
    </ligand>
</feature>
<comment type="function">
    <text evidence="1">Catalyzes the base-exchange of a guanine (G) residue with the queuine precursor 7-aminomethyl-7-deazaguanine (PreQ1) at position 34 (anticodon wobble position) in tRNAs with GU(N) anticodons (tRNA-Asp, -Asn, -His and -Tyr). Catalysis occurs through a double-displacement mechanism. The nucleophile active site attacks the C1' of nucleotide 34 to detach the guanine base from the RNA, forming a covalent enzyme-RNA intermediate. The proton acceptor active site deprotonates the incoming PreQ1, allowing a nucleophilic attack on the C1' of the ribose to form the product. After dissociation, two additional enzymatic reactions on the tRNA convert PreQ1 to queuine (Q), resulting in the hypermodified nucleoside queuosine (7-(((4,5-cis-dihydroxy-2-cyclopenten-1-yl)amino)methyl)-7-deazaguanosine).</text>
</comment>
<comment type="catalytic activity">
    <reaction evidence="1">
        <text>7-aminomethyl-7-carbaguanine + guanosine(34) in tRNA = 7-aminomethyl-7-carbaguanosine(34) in tRNA + guanine</text>
        <dbReference type="Rhea" id="RHEA:24104"/>
        <dbReference type="Rhea" id="RHEA-COMP:10341"/>
        <dbReference type="Rhea" id="RHEA-COMP:10342"/>
        <dbReference type="ChEBI" id="CHEBI:16235"/>
        <dbReference type="ChEBI" id="CHEBI:58703"/>
        <dbReference type="ChEBI" id="CHEBI:74269"/>
        <dbReference type="ChEBI" id="CHEBI:82833"/>
        <dbReference type="EC" id="2.4.2.29"/>
    </reaction>
</comment>
<comment type="cofactor">
    <cofactor evidence="1">
        <name>Zn(2+)</name>
        <dbReference type="ChEBI" id="CHEBI:29105"/>
    </cofactor>
    <text evidence="1">Binds 1 zinc ion per subunit.</text>
</comment>
<comment type="pathway">
    <text evidence="1">tRNA modification; tRNA-queuosine biosynthesis.</text>
</comment>
<comment type="subunit">
    <text evidence="1">Homodimer. Within each dimer, one monomer is responsible for RNA recognition and catalysis, while the other monomer binds to the replacement base PreQ1.</text>
</comment>
<comment type="similarity">
    <text evidence="1">Belongs to the queuine tRNA-ribosyltransferase family.</text>
</comment>
<keyword id="KW-0328">Glycosyltransferase</keyword>
<keyword id="KW-0479">Metal-binding</keyword>
<keyword id="KW-0671">Queuosine biosynthesis</keyword>
<keyword id="KW-0808">Transferase</keyword>
<keyword id="KW-0819">tRNA processing</keyword>
<keyword id="KW-0862">Zinc</keyword>
<sequence length="379" mass="42846">MKYELVSTDGRARRGRLIFERGVVETPAFMPVGTYGTVKGMTPEEVAQTGAQILLGNTFHLWLRPGQEIMKLHGDLHDFMQWPGPILTDSGGFQVFSLGAMRKIKEEGVYFRNPINGSPVFLSPEKSMEIQYDLGSDIVMIFDECTPYPADWDYAKRSMEMSLRWAKRSRQRFDELGNQNALFGIIQGSVYEDLRDVSLKGLVEIGFDGYAVGGLAVGEPKEDMHRILEHVCPMIPQDKPRYLMGVGKPEDLVEGVRRGIDMFDCVMPTRNARNGHLFVTGGVVKIRNAQYKEDTTALDPECDCYTCRNYSRAYLHHLDRCNEILGARLNTIHNLRYYQRLMAALRQAIEEGKLERFAADFYGRRGRTVPPLGAADAAS</sequence>
<gene>
    <name evidence="1" type="primary">tgt</name>
    <name type="ordered locus">NT01EI_1039</name>
</gene>
<reference key="1">
    <citation type="submission" date="2009-03" db="EMBL/GenBank/DDBJ databases">
        <title>Complete genome sequence of Edwardsiella ictaluri 93-146.</title>
        <authorList>
            <person name="Williams M.L."/>
            <person name="Gillaspy A.F."/>
            <person name="Dyer D.W."/>
            <person name="Thune R.L."/>
            <person name="Waldbieser G.C."/>
            <person name="Schuster S.C."/>
            <person name="Gipson J."/>
            <person name="Zaitshik J."/>
            <person name="Landry C."/>
            <person name="Lawrence M.L."/>
        </authorList>
    </citation>
    <scope>NUCLEOTIDE SEQUENCE [LARGE SCALE GENOMIC DNA]</scope>
    <source>
        <strain>93-146</strain>
    </source>
</reference>
<accession>C5BCF7</accession>
<dbReference type="EC" id="2.4.2.29" evidence="1"/>
<dbReference type="EMBL" id="CP001600">
    <property type="protein sequence ID" value="ACR68251.1"/>
    <property type="molecule type" value="Genomic_DNA"/>
</dbReference>
<dbReference type="RefSeq" id="WP_015870432.1">
    <property type="nucleotide sequence ID" value="NZ_CP169062.1"/>
</dbReference>
<dbReference type="SMR" id="C5BCF7"/>
<dbReference type="STRING" id="67780.B6E78_15620"/>
<dbReference type="GeneID" id="69538075"/>
<dbReference type="KEGG" id="eic:NT01EI_1039"/>
<dbReference type="PATRIC" id="fig|634503.3.peg.941"/>
<dbReference type="HOGENOM" id="CLU_022060_0_1_6"/>
<dbReference type="OrthoDB" id="9805417at2"/>
<dbReference type="UniPathway" id="UPA00392"/>
<dbReference type="Proteomes" id="UP000001485">
    <property type="component" value="Chromosome"/>
</dbReference>
<dbReference type="GO" id="GO:0005829">
    <property type="term" value="C:cytosol"/>
    <property type="evidence" value="ECO:0007669"/>
    <property type="project" value="TreeGrafter"/>
</dbReference>
<dbReference type="GO" id="GO:0046872">
    <property type="term" value="F:metal ion binding"/>
    <property type="evidence" value="ECO:0007669"/>
    <property type="project" value="UniProtKB-KW"/>
</dbReference>
<dbReference type="GO" id="GO:0008479">
    <property type="term" value="F:tRNA-guanosine(34) queuine transglycosylase activity"/>
    <property type="evidence" value="ECO:0007669"/>
    <property type="project" value="UniProtKB-UniRule"/>
</dbReference>
<dbReference type="GO" id="GO:0008616">
    <property type="term" value="P:queuosine biosynthetic process"/>
    <property type="evidence" value="ECO:0007669"/>
    <property type="project" value="UniProtKB-UniRule"/>
</dbReference>
<dbReference type="GO" id="GO:0002099">
    <property type="term" value="P:tRNA wobble guanine modification"/>
    <property type="evidence" value="ECO:0007669"/>
    <property type="project" value="TreeGrafter"/>
</dbReference>
<dbReference type="GO" id="GO:0101030">
    <property type="term" value="P:tRNA-guanine transglycosylation"/>
    <property type="evidence" value="ECO:0007669"/>
    <property type="project" value="InterPro"/>
</dbReference>
<dbReference type="FunFam" id="3.20.20.105:FF:000001">
    <property type="entry name" value="Queuine tRNA-ribosyltransferase"/>
    <property type="match status" value="1"/>
</dbReference>
<dbReference type="Gene3D" id="3.20.20.105">
    <property type="entry name" value="Queuine tRNA-ribosyltransferase-like"/>
    <property type="match status" value="1"/>
</dbReference>
<dbReference type="HAMAP" id="MF_00168">
    <property type="entry name" value="Q_tRNA_Tgt"/>
    <property type="match status" value="1"/>
</dbReference>
<dbReference type="InterPro" id="IPR050076">
    <property type="entry name" value="ArchSynthase1/Queuine_TRR"/>
</dbReference>
<dbReference type="InterPro" id="IPR004803">
    <property type="entry name" value="TGT"/>
</dbReference>
<dbReference type="InterPro" id="IPR036511">
    <property type="entry name" value="TGT-like_sf"/>
</dbReference>
<dbReference type="InterPro" id="IPR002616">
    <property type="entry name" value="tRNA_ribo_trans-like"/>
</dbReference>
<dbReference type="NCBIfam" id="TIGR00430">
    <property type="entry name" value="Q_tRNA_tgt"/>
    <property type="match status" value="1"/>
</dbReference>
<dbReference type="NCBIfam" id="TIGR00449">
    <property type="entry name" value="tgt_general"/>
    <property type="match status" value="1"/>
</dbReference>
<dbReference type="PANTHER" id="PTHR46499">
    <property type="entry name" value="QUEUINE TRNA-RIBOSYLTRANSFERASE"/>
    <property type="match status" value="1"/>
</dbReference>
<dbReference type="PANTHER" id="PTHR46499:SF1">
    <property type="entry name" value="QUEUINE TRNA-RIBOSYLTRANSFERASE"/>
    <property type="match status" value="1"/>
</dbReference>
<dbReference type="Pfam" id="PF01702">
    <property type="entry name" value="TGT"/>
    <property type="match status" value="1"/>
</dbReference>
<dbReference type="SUPFAM" id="SSF51713">
    <property type="entry name" value="tRNA-guanine transglycosylase"/>
    <property type="match status" value="1"/>
</dbReference>
<proteinExistence type="inferred from homology"/>
<protein>
    <recommendedName>
        <fullName evidence="1">Queuine tRNA-ribosyltransferase</fullName>
        <ecNumber evidence="1">2.4.2.29</ecNumber>
    </recommendedName>
    <alternativeName>
        <fullName evidence="1">Guanine insertion enzyme</fullName>
    </alternativeName>
    <alternativeName>
        <fullName evidence="1">tRNA-guanine transglycosylase</fullName>
    </alternativeName>
</protein>
<name>TGT_EDWI9</name>
<evidence type="ECO:0000255" key="1">
    <source>
        <dbReference type="HAMAP-Rule" id="MF_00168"/>
    </source>
</evidence>